<gene>
    <name evidence="1" type="primary">mraY</name>
    <name type="ordered locus">Xfasm12_2050</name>
</gene>
<protein>
    <recommendedName>
        <fullName evidence="1">Phospho-N-acetylmuramoyl-pentapeptide-transferase</fullName>
        <ecNumber evidence="1">2.7.8.13</ecNumber>
    </recommendedName>
    <alternativeName>
        <fullName evidence="1">UDP-MurNAc-pentapeptide phosphotransferase</fullName>
    </alternativeName>
</protein>
<name>MRAY_XYLFM</name>
<evidence type="ECO:0000255" key="1">
    <source>
        <dbReference type="HAMAP-Rule" id="MF_00038"/>
    </source>
</evidence>
<organism>
    <name type="scientific">Xylella fastidiosa (strain M12)</name>
    <dbReference type="NCBI Taxonomy" id="405440"/>
    <lineage>
        <taxon>Bacteria</taxon>
        <taxon>Pseudomonadati</taxon>
        <taxon>Pseudomonadota</taxon>
        <taxon>Gammaproteobacteria</taxon>
        <taxon>Lysobacterales</taxon>
        <taxon>Lysobacteraceae</taxon>
        <taxon>Xylella</taxon>
    </lineage>
</organism>
<feature type="chain" id="PRO_1000090691" description="Phospho-N-acetylmuramoyl-pentapeptide-transferase">
    <location>
        <begin position="1"/>
        <end position="361"/>
    </location>
</feature>
<feature type="transmembrane region" description="Helical" evidence="1">
    <location>
        <begin position="26"/>
        <end position="46"/>
    </location>
</feature>
<feature type="transmembrane region" description="Helical" evidence="1">
    <location>
        <begin position="73"/>
        <end position="93"/>
    </location>
</feature>
<feature type="transmembrane region" description="Helical" evidence="1">
    <location>
        <begin position="98"/>
        <end position="118"/>
    </location>
</feature>
<feature type="transmembrane region" description="Helical" evidence="1">
    <location>
        <begin position="139"/>
        <end position="159"/>
    </location>
</feature>
<feature type="transmembrane region" description="Helical" evidence="1">
    <location>
        <begin position="168"/>
        <end position="188"/>
    </location>
</feature>
<feature type="transmembrane region" description="Helical" evidence="1">
    <location>
        <begin position="200"/>
        <end position="220"/>
    </location>
</feature>
<feature type="transmembrane region" description="Helical" evidence="1">
    <location>
        <begin position="237"/>
        <end position="257"/>
    </location>
</feature>
<feature type="transmembrane region" description="Helical" evidence="1">
    <location>
        <begin position="264"/>
        <end position="284"/>
    </location>
</feature>
<feature type="transmembrane region" description="Helical" evidence="1">
    <location>
        <begin position="289"/>
        <end position="309"/>
    </location>
</feature>
<feature type="transmembrane region" description="Helical" evidence="1">
    <location>
        <begin position="339"/>
        <end position="359"/>
    </location>
</feature>
<sequence>MLFEFARWLQQFESLFGLFNYLTFRSILAALTALFLSLWIGPVLIQKLSQFKGGQPIRQDGPKMHFSKAGTPTMGGSLILMTVTLSVLLWGDLRNRYVWLVLVVMLAFGAIGWYDDWIKLARRDPNGLKSRWKYLLQSIFGLAAGLFLYFTADVPAAVTFYIPMFKSIALPLTSISFVAITYFWIVGFSNAVNLTDGLDGLAIMPTVLVACALGVFAYASGNTLFSSYLKIPTIPGAGDLIIICAAIAGAGLGFLWFNAYPAMVFMGDIGALALGAVLGTIAVIVRQELVLVVMGGVFVIETLSVIIQVTSFKLTGKRVFRMAPIHHHFELKGWPEPRVIVRFWIISVVLVLVGLATLKVR</sequence>
<reference key="1">
    <citation type="journal article" date="2010" name="J. Bacteriol.">
        <title>Whole genome sequences of two Xylella fastidiosa strains (M12 and M23) causing almond leaf scorch disease in California.</title>
        <authorList>
            <person name="Chen J."/>
            <person name="Xie G."/>
            <person name="Han S."/>
            <person name="Chertkov O."/>
            <person name="Sims D."/>
            <person name="Civerolo E.L."/>
        </authorList>
    </citation>
    <scope>NUCLEOTIDE SEQUENCE [LARGE SCALE GENOMIC DNA]</scope>
    <source>
        <strain>M12</strain>
    </source>
</reference>
<comment type="function">
    <text evidence="1">Catalyzes the initial step of the lipid cycle reactions in the biosynthesis of the cell wall peptidoglycan: transfers peptidoglycan precursor phospho-MurNAc-pentapeptide from UDP-MurNAc-pentapeptide onto the lipid carrier undecaprenyl phosphate, yielding undecaprenyl-pyrophosphoryl-MurNAc-pentapeptide, known as lipid I.</text>
</comment>
<comment type="catalytic activity">
    <reaction evidence="1">
        <text>UDP-N-acetyl-alpha-D-muramoyl-L-alanyl-gamma-D-glutamyl-meso-2,6-diaminopimeloyl-D-alanyl-D-alanine + di-trans,octa-cis-undecaprenyl phosphate = di-trans,octa-cis-undecaprenyl diphospho-N-acetyl-alpha-D-muramoyl-L-alanyl-D-glutamyl-meso-2,6-diaminopimeloyl-D-alanyl-D-alanine + UMP</text>
        <dbReference type="Rhea" id="RHEA:28386"/>
        <dbReference type="ChEBI" id="CHEBI:57865"/>
        <dbReference type="ChEBI" id="CHEBI:60392"/>
        <dbReference type="ChEBI" id="CHEBI:61386"/>
        <dbReference type="ChEBI" id="CHEBI:61387"/>
        <dbReference type="EC" id="2.7.8.13"/>
    </reaction>
</comment>
<comment type="cofactor">
    <cofactor evidence="1">
        <name>Mg(2+)</name>
        <dbReference type="ChEBI" id="CHEBI:18420"/>
    </cofactor>
</comment>
<comment type="pathway">
    <text evidence="1">Cell wall biogenesis; peptidoglycan biosynthesis.</text>
</comment>
<comment type="subcellular location">
    <subcellularLocation>
        <location evidence="1">Cell inner membrane</location>
        <topology evidence="1">Multi-pass membrane protein</topology>
    </subcellularLocation>
</comment>
<comment type="similarity">
    <text evidence="1">Belongs to the glycosyltransferase 4 family. MraY subfamily.</text>
</comment>
<accession>B0U4Z9</accession>
<keyword id="KW-0131">Cell cycle</keyword>
<keyword id="KW-0132">Cell division</keyword>
<keyword id="KW-0997">Cell inner membrane</keyword>
<keyword id="KW-1003">Cell membrane</keyword>
<keyword id="KW-0133">Cell shape</keyword>
<keyword id="KW-0961">Cell wall biogenesis/degradation</keyword>
<keyword id="KW-0460">Magnesium</keyword>
<keyword id="KW-0472">Membrane</keyword>
<keyword id="KW-0479">Metal-binding</keyword>
<keyword id="KW-0573">Peptidoglycan synthesis</keyword>
<keyword id="KW-0808">Transferase</keyword>
<keyword id="KW-0812">Transmembrane</keyword>
<keyword id="KW-1133">Transmembrane helix</keyword>
<dbReference type="EC" id="2.7.8.13" evidence="1"/>
<dbReference type="EMBL" id="CP000941">
    <property type="protein sequence ID" value="ACA12916.1"/>
    <property type="molecule type" value="Genomic_DNA"/>
</dbReference>
<dbReference type="RefSeq" id="WP_004084478.1">
    <property type="nucleotide sequence ID" value="NC_010513.1"/>
</dbReference>
<dbReference type="SMR" id="B0U4Z9"/>
<dbReference type="GeneID" id="93905727"/>
<dbReference type="KEGG" id="xfm:Xfasm12_2050"/>
<dbReference type="HOGENOM" id="CLU_023982_0_0_6"/>
<dbReference type="UniPathway" id="UPA00219"/>
<dbReference type="GO" id="GO:0005886">
    <property type="term" value="C:plasma membrane"/>
    <property type="evidence" value="ECO:0007669"/>
    <property type="project" value="UniProtKB-SubCell"/>
</dbReference>
<dbReference type="GO" id="GO:0046872">
    <property type="term" value="F:metal ion binding"/>
    <property type="evidence" value="ECO:0007669"/>
    <property type="project" value="UniProtKB-KW"/>
</dbReference>
<dbReference type="GO" id="GO:0008963">
    <property type="term" value="F:phospho-N-acetylmuramoyl-pentapeptide-transferase activity"/>
    <property type="evidence" value="ECO:0007669"/>
    <property type="project" value="UniProtKB-UniRule"/>
</dbReference>
<dbReference type="GO" id="GO:0051992">
    <property type="term" value="F:UDP-N-acetylmuramoyl-L-alanyl-D-glutamyl-meso-2,6-diaminopimelyl-D-alanyl-D-alanine:undecaprenyl-phosphate transferase activity"/>
    <property type="evidence" value="ECO:0007669"/>
    <property type="project" value="RHEA"/>
</dbReference>
<dbReference type="GO" id="GO:0051301">
    <property type="term" value="P:cell division"/>
    <property type="evidence" value="ECO:0007669"/>
    <property type="project" value="UniProtKB-KW"/>
</dbReference>
<dbReference type="GO" id="GO:0071555">
    <property type="term" value="P:cell wall organization"/>
    <property type="evidence" value="ECO:0007669"/>
    <property type="project" value="UniProtKB-KW"/>
</dbReference>
<dbReference type="GO" id="GO:0009252">
    <property type="term" value="P:peptidoglycan biosynthetic process"/>
    <property type="evidence" value="ECO:0007669"/>
    <property type="project" value="UniProtKB-UniRule"/>
</dbReference>
<dbReference type="GO" id="GO:0008360">
    <property type="term" value="P:regulation of cell shape"/>
    <property type="evidence" value="ECO:0007669"/>
    <property type="project" value="UniProtKB-KW"/>
</dbReference>
<dbReference type="CDD" id="cd06852">
    <property type="entry name" value="GT_MraY"/>
    <property type="match status" value="1"/>
</dbReference>
<dbReference type="HAMAP" id="MF_00038">
    <property type="entry name" value="MraY"/>
    <property type="match status" value="1"/>
</dbReference>
<dbReference type="InterPro" id="IPR000715">
    <property type="entry name" value="Glycosyl_transferase_4"/>
</dbReference>
<dbReference type="InterPro" id="IPR003524">
    <property type="entry name" value="PNAcMuramoyl-5peptid_Trfase"/>
</dbReference>
<dbReference type="InterPro" id="IPR018480">
    <property type="entry name" value="PNAcMuramoyl-5peptid_Trfase_CS"/>
</dbReference>
<dbReference type="NCBIfam" id="TIGR00445">
    <property type="entry name" value="mraY"/>
    <property type="match status" value="1"/>
</dbReference>
<dbReference type="PANTHER" id="PTHR22926">
    <property type="entry name" value="PHOSPHO-N-ACETYLMURAMOYL-PENTAPEPTIDE-TRANSFERASE"/>
    <property type="match status" value="1"/>
</dbReference>
<dbReference type="PANTHER" id="PTHR22926:SF5">
    <property type="entry name" value="PHOSPHO-N-ACETYLMURAMOYL-PENTAPEPTIDE-TRANSFERASE HOMOLOG"/>
    <property type="match status" value="1"/>
</dbReference>
<dbReference type="Pfam" id="PF00953">
    <property type="entry name" value="Glycos_transf_4"/>
    <property type="match status" value="1"/>
</dbReference>
<dbReference type="PROSITE" id="PS01347">
    <property type="entry name" value="MRAY_1"/>
    <property type="match status" value="1"/>
</dbReference>
<dbReference type="PROSITE" id="PS01348">
    <property type="entry name" value="MRAY_2"/>
    <property type="match status" value="1"/>
</dbReference>
<proteinExistence type="inferred from homology"/>